<gene>
    <name type="primary">plp</name>
    <name type="ordered locus">RT0565</name>
</gene>
<name>PLP_RICTY</name>
<proteinExistence type="inferred from homology"/>
<protein>
    <recommendedName>
        <fullName>Parvulin-like PPIase</fullName>
        <ecNumber>5.2.1.8</ecNumber>
    </recommendedName>
    <alternativeName>
        <fullName>Peptidyl-prolyl cis-trans isomerase plp</fullName>
    </alternativeName>
    <alternativeName>
        <fullName>Rotamase plp</fullName>
    </alternativeName>
</protein>
<accession>Q68WG0</accession>
<organism>
    <name type="scientific">Rickettsia typhi (strain ATCC VR-144 / Wilmington)</name>
    <dbReference type="NCBI Taxonomy" id="257363"/>
    <lineage>
        <taxon>Bacteria</taxon>
        <taxon>Pseudomonadati</taxon>
        <taxon>Pseudomonadota</taxon>
        <taxon>Alphaproteobacteria</taxon>
        <taxon>Rickettsiales</taxon>
        <taxon>Rickettsiaceae</taxon>
        <taxon>Rickettsieae</taxon>
        <taxon>Rickettsia</taxon>
        <taxon>typhus group</taxon>
    </lineage>
</organism>
<keyword id="KW-0998">Cell outer membrane</keyword>
<keyword id="KW-0413">Isomerase</keyword>
<keyword id="KW-0472">Membrane</keyword>
<keyword id="KW-0697">Rotamase</keyword>
<keyword id="KW-0732">Signal</keyword>
<dbReference type="EC" id="5.2.1.8"/>
<dbReference type="EMBL" id="AE017197">
    <property type="protein sequence ID" value="AAU04032.1"/>
    <property type="status" value="ALT_INIT"/>
    <property type="molecule type" value="Genomic_DNA"/>
</dbReference>
<dbReference type="RefSeq" id="WP_014419445.1">
    <property type="nucleotide sequence ID" value="NC_006142.1"/>
</dbReference>
<dbReference type="SMR" id="Q68WG0"/>
<dbReference type="KEGG" id="rty:RT0565"/>
<dbReference type="eggNOG" id="COG0760">
    <property type="taxonomic scope" value="Bacteria"/>
</dbReference>
<dbReference type="HOGENOM" id="CLU_034646_1_3_5"/>
<dbReference type="OrthoDB" id="14196at2"/>
<dbReference type="Proteomes" id="UP000000604">
    <property type="component" value="Chromosome"/>
</dbReference>
<dbReference type="GO" id="GO:0009279">
    <property type="term" value="C:cell outer membrane"/>
    <property type="evidence" value="ECO:0007669"/>
    <property type="project" value="UniProtKB-SubCell"/>
</dbReference>
<dbReference type="GO" id="GO:0003755">
    <property type="term" value="F:peptidyl-prolyl cis-trans isomerase activity"/>
    <property type="evidence" value="ECO:0007669"/>
    <property type="project" value="UniProtKB-KW"/>
</dbReference>
<dbReference type="Gene3D" id="3.10.50.40">
    <property type="match status" value="1"/>
</dbReference>
<dbReference type="InterPro" id="IPR046357">
    <property type="entry name" value="PPIase_dom_sf"/>
</dbReference>
<dbReference type="InterPro" id="IPR000297">
    <property type="entry name" value="PPIase_PpiC"/>
</dbReference>
<dbReference type="InterPro" id="IPR050245">
    <property type="entry name" value="PrsA_foldase"/>
</dbReference>
<dbReference type="PANTHER" id="PTHR47245:SF2">
    <property type="entry name" value="PEPTIDYL-PROLYL CIS-TRANS ISOMERASE HP_0175-RELATED"/>
    <property type="match status" value="1"/>
</dbReference>
<dbReference type="PANTHER" id="PTHR47245">
    <property type="entry name" value="PEPTIDYLPROLYL ISOMERASE"/>
    <property type="match status" value="1"/>
</dbReference>
<dbReference type="Pfam" id="PF13616">
    <property type="entry name" value="Rotamase_3"/>
    <property type="match status" value="1"/>
</dbReference>
<dbReference type="SUPFAM" id="SSF54534">
    <property type="entry name" value="FKBP-like"/>
    <property type="match status" value="1"/>
</dbReference>
<dbReference type="PROSITE" id="PS50198">
    <property type="entry name" value="PPIC_PPIASE_2"/>
    <property type="match status" value="1"/>
</dbReference>
<feature type="signal peptide" evidence="2">
    <location>
        <begin position="1"/>
        <end position="20"/>
    </location>
</feature>
<feature type="chain" id="PRO_0000289287" description="Parvulin-like PPIase">
    <location>
        <begin position="21"/>
        <end position="282"/>
    </location>
</feature>
<feature type="domain" description="PpiC" evidence="3">
    <location>
        <begin position="138"/>
        <end position="231"/>
    </location>
</feature>
<comment type="catalytic activity">
    <reaction>
        <text>[protein]-peptidylproline (omega=180) = [protein]-peptidylproline (omega=0)</text>
        <dbReference type="Rhea" id="RHEA:16237"/>
        <dbReference type="Rhea" id="RHEA-COMP:10747"/>
        <dbReference type="Rhea" id="RHEA-COMP:10748"/>
        <dbReference type="ChEBI" id="CHEBI:83833"/>
        <dbReference type="ChEBI" id="CHEBI:83834"/>
        <dbReference type="EC" id="5.2.1.8"/>
    </reaction>
</comment>
<comment type="subcellular location">
    <subcellularLocation>
        <location evidence="1">Cell outer membrane</location>
    </subcellularLocation>
</comment>
<comment type="similarity">
    <text evidence="4">Belongs to the PpiC/parvulin rotamase family.</text>
</comment>
<comment type="sequence caution" evidence="4">
    <conflict type="erroneous initiation">
        <sequence resource="EMBL-CDS" id="AAU04032"/>
    </conflict>
</comment>
<reference key="1">
    <citation type="journal article" date="2004" name="J. Bacteriol.">
        <title>Complete genome sequence of Rickettsia typhi and comparison with sequences of other Rickettsiae.</title>
        <authorList>
            <person name="McLeod M.P."/>
            <person name="Qin X."/>
            <person name="Karpathy S.E."/>
            <person name="Gioia J."/>
            <person name="Highlander S.K."/>
            <person name="Fox G.E."/>
            <person name="McNeill T.Z."/>
            <person name="Jiang H."/>
            <person name="Muzny D."/>
            <person name="Jacob L.S."/>
            <person name="Hawes A.C."/>
            <person name="Sodergren E."/>
            <person name="Gill R."/>
            <person name="Hume J."/>
            <person name="Morgan M."/>
            <person name="Fan G."/>
            <person name="Amin A.G."/>
            <person name="Gibbs R.A."/>
            <person name="Hong C."/>
            <person name="Yu X.-J."/>
            <person name="Walker D.H."/>
            <person name="Weinstock G.M."/>
        </authorList>
    </citation>
    <scope>NUCLEOTIDE SEQUENCE [LARGE SCALE GENOMIC DNA]</scope>
    <source>
        <strain>ATCC VR-144 / Wilmington</strain>
    </source>
</reference>
<sequence length="282" mass="31596">MKKLSVIFLSVSMLSSIAFCDQDKVVATYKGGEVKESQIMQEFKPQLNLQSGETIKNFDDFPLQDQEKLIKIYVNNLLLKEEVAKSSITSSKEFQEKLENAKNQLAQQELLANYIKSNITDKMFDDEYNKYVDNLKGKEQIKVAHILVKSQKEANTVKTKLSKGGNFNKLAEEFSLDKATASNGGVIGYIILNQSGQLVPEFENKAFALKVNEVSTPVKTDFGWHIIKVLEKKPVPIPTKKEAKVTIDNILAAEILKKYISDLEAKADLKIMLPKANSKTGS</sequence>
<evidence type="ECO:0000250" key="1"/>
<evidence type="ECO:0000255" key="2"/>
<evidence type="ECO:0000255" key="3">
    <source>
        <dbReference type="PROSITE-ProRule" id="PRU00278"/>
    </source>
</evidence>
<evidence type="ECO:0000305" key="4"/>